<comment type="subcellular location">
    <subcellularLocation>
        <location>Plastid</location>
        <location>Chloroplast</location>
    </subcellularLocation>
</comment>
<comment type="similarity">
    <text evidence="2">Belongs to the bacterial ribosomal protein bL27 family.</text>
</comment>
<sequence>MAHKKGAGSTKNGRDSNAKRLGVKRFGGQRVKAGNILVRQRGMKFTPGLNVGCGKDFTLYALTDGIVNFDYKNAQQKRINIIG</sequence>
<protein>
    <recommendedName>
        <fullName evidence="2">Large ribosomal subunit protein bL27c</fullName>
    </recommendedName>
    <alternativeName>
        <fullName>50S ribosomal protein L27, chloroplastic</fullName>
    </alternativeName>
</protein>
<organism>
    <name type="scientific">Trieres chinensis</name>
    <name type="common">Marine centric diatom</name>
    <name type="synonym">Odontella sinensis</name>
    <dbReference type="NCBI Taxonomy" id="1514140"/>
    <lineage>
        <taxon>Eukaryota</taxon>
        <taxon>Sar</taxon>
        <taxon>Stramenopiles</taxon>
        <taxon>Ochrophyta</taxon>
        <taxon>Bacillariophyta</taxon>
        <taxon>Mediophyceae</taxon>
        <taxon>Biddulphiophycidae</taxon>
        <taxon>Eupodiscales</taxon>
        <taxon>Parodontellaceae</taxon>
        <taxon>Trieres</taxon>
    </lineage>
</organism>
<feature type="chain" id="PRO_0000181223" description="Large ribosomal subunit protein bL27c">
    <location>
        <begin position="1"/>
        <end position="83"/>
    </location>
</feature>
<feature type="region of interest" description="Disordered" evidence="1">
    <location>
        <begin position="1"/>
        <end position="24"/>
    </location>
</feature>
<reference key="1">
    <citation type="journal article" date="1995" name="Plant Mol. Biol. Rep.">
        <title>The chloroplast genome of a chlorophyll a+c-containing alga, Odontella sinensis.</title>
        <authorList>
            <person name="Kowallik K.V."/>
            <person name="Stoebe B."/>
            <person name="Schaffran I."/>
            <person name="Kroth-Pancic P."/>
            <person name="Freier U."/>
        </authorList>
    </citation>
    <scope>NUCLEOTIDE SEQUENCE [LARGE SCALE GENOMIC DNA]</scope>
</reference>
<evidence type="ECO:0000256" key="1">
    <source>
        <dbReference type="SAM" id="MobiDB-lite"/>
    </source>
</evidence>
<evidence type="ECO:0000305" key="2"/>
<dbReference type="EMBL" id="Z67753">
    <property type="protein sequence ID" value="CAA91662.1"/>
    <property type="molecule type" value="Genomic_DNA"/>
</dbReference>
<dbReference type="PIR" id="S78289">
    <property type="entry name" value="S78289"/>
</dbReference>
<dbReference type="RefSeq" id="NP_043630.1">
    <property type="nucleotide sequence ID" value="NC_001713.1"/>
</dbReference>
<dbReference type="SMR" id="P49561"/>
<dbReference type="GeneID" id="801831"/>
<dbReference type="GO" id="GO:0009507">
    <property type="term" value="C:chloroplast"/>
    <property type="evidence" value="ECO:0007669"/>
    <property type="project" value="UniProtKB-SubCell"/>
</dbReference>
<dbReference type="GO" id="GO:0005762">
    <property type="term" value="C:mitochondrial large ribosomal subunit"/>
    <property type="evidence" value="ECO:0007669"/>
    <property type="project" value="TreeGrafter"/>
</dbReference>
<dbReference type="GO" id="GO:0003735">
    <property type="term" value="F:structural constituent of ribosome"/>
    <property type="evidence" value="ECO:0007669"/>
    <property type="project" value="InterPro"/>
</dbReference>
<dbReference type="GO" id="GO:0006412">
    <property type="term" value="P:translation"/>
    <property type="evidence" value="ECO:0007669"/>
    <property type="project" value="UniProtKB-UniRule"/>
</dbReference>
<dbReference type="FunFam" id="2.40.50.100:FF:000020">
    <property type="entry name" value="50S ribosomal protein L27"/>
    <property type="match status" value="1"/>
</dbReference>
<dbReference type="Gene3D" id="2.40.50.100">
    <property type="match status" value="1"/>
</dbReference>
<dbReference type="HAMAP" id="MF_00539">
    <property type="entry name" value="Ribosomal_bL27"/>
    <property type="match status" value="1"/>
</dbReference>
<dbReference type="InterPro" id="IPR001684">
    <property type="entry name" value="Ribosomal_bL27"/>
</dbReference>
<dbReference type="InterPro" id="IPR018261">
    <property type="entry name" value="Ribosomal_bL27_CS"/>
</dbReference>
<dbReference type="NCBIfam" id="TIGR00062">
    <property type="entry name" value="L27"/>
    <property type="match status" value="1"/>
</dbReference>
<dbReference type="PANTHER" id="PTHR15893:SF0">
    <property type="entry name" value="LARGE RIBOSOMAL SUBUNIT PROTEIN BL27M"/>
    <property type="match status" value="1"/>
</dbReference>
<dbReference type="PANTHER" id="PTHR15893">
    <property type="entry name" value="RIBOSOMAL PROTEIN L27"/>
    <property type="match status" value="1"/>
</dbReference>
<dbReference type="Pfam" id="PF01016">
    <property type="entry name" value="Ribosomal_L27"/>
    <property type="match status" value="1"/>
</dbReference>
<dbReference type="PRINTS" id="PR00063">
    <property type="entry name" value="RIBOSOMALL27"/>
</dbReference>
<dbReference type="SUPFAM" id="SSF110324">
    <property type="entry name" value="Ribosomal L27 protein-like"/>
    <property type="match status" value="1"/>
</dbReference>
<dbReference type="PROSITE" id="PS00831">
    <property type="entry name" value="RIBOSOMAL_L27"/>
    <property type="match status" value="1"/>
</dbReference>
<accession>P49561</accession>
<geneLocation type="chloroplast"/>
<keyword id="KW-0150">Chloroplast</keyword>
<keyword id="KW-0934">Plastid</keyword>
<keyword id="KW-0687">Ribonucleoprotein</keyword>
<keyword id="KW-0689">Ribosomal protein</keyword>
<name>RK27_TRICV</name>
<gene>
    <name type="primary">rpl27</name>
</gene>
<proteinExistence type="inferred from homology"/>